<reference key="1">
    <citation type="journal article" date="1997" name="Microbiology">
        <title>Sequencing and functional annotation of the Bacillus subtilis genes in the 200 kb rrnB-dnaB region.</title>
        <authorList>
            <person name="Lapidus A."/>
            <person name="Galleron N."/>
            <person name="Sorokin A."/>
            <person name="Ehrlich S.D."/>
        </authorList>
    </citation>
    <scope>NUCLEOTIDE SEQUENCE [GENOMIC DNA]</scope>
</reference>
<reference key="2">
    <citation type="journal article" date="1997" name="Nature">
        <title>The complete genome sequence of the Gram-positive bacterium Bacillus subtilis.</title>
        <authorList>
            <person name="Kunst F."/>
            <person name="Ogasawara N."/>
            <person name="Moszer I."/>
            <person name="Albertini A.M."/>
            <person name="Alloni G."/>
            <person name="Azevedo V."/>
            <person name="Bertero M.G."/>
            <person name="Bessieres P."/>
            <person name="Bolotin A."/>
            <person name="Borchert S."/>
            <person name="Borriss R."/>
            <person name="Boursier L."/>
            <person name="Brans A."/>
            <person name="Braun M."/>
            <person name="Brignell S.C."/>
            <person name="Bron S."/>
            <person name="Brouillet S."/>
            <person name="Bruschi C.V."/>
            <person name="Caldwell B."/>
            <person name="Capuano V."/>
            <person name="Carter N.M."/>
            <person name="Choi S.-K."/>
            <person name="Codani J.-J."/>
            <person name="Connerton I.F."/>
            <person name="Cummings N.J."/>
            <person name="Daniel R.A."/>
            <person name="Denizot F."/>
            <person name="Devine K.M."/>
            <person name="Duesterhoeft A."/>
            <person name="Ehrlich S.D."/>
            <person name="Emmerson P.T."/>
            <person name="Entian K.-D."/>
            <person name="Errington J."/>
            <person name="Fabret C."/>
            <person name="Ferrari E."/>
            <person name="Foulger D."/>
            <person name="Fritz C."/>
            <person name="Fujita M."/>
            <person name="Fujita Y."/>
            <person name="Fuma S."/>
            <person name="Galizzi A."/>
            <person name="Galleron N."/>
            <person name="Ghim S.-Y."/>
            <person name="Glaser P."/>
            <person name="Goffeau A."/>
            <person name="Golightly E.J."/>
            <person name="Grandi G."/>
            <person name="Guiseppi G."/>
            <person name="Guy B.J."/>
            <person name="Haga K."/>
            <person name="Haiech J."/>
            <person name="Harwood C.R."/>
            <person name="Henaut A."/>
            <person name="Hilbert H."/>
            <person name="Holsappel S."/>
            <person name="Hosono S."/>
            <person name="Hullo M.-F."/>
            <person name="Itaya M."/>
            <person name="Jones L.-M."/>
            <person name="Joris B."/>
            <person name="Karamata D."/>
            <person name="Kasahara Y."/>
            <person name="Klaerr-Blanchard M."/>
            <person name="Klein C."/>
            <person name="Kobayashi Y."/>
            <person name="Koetter P."/>
            <person name="Koningstein G."/>
            <person name="Krogh S."/>
            <person name="Kumano M."/>
            <person name="Kurita K."/>
            <person name="Lapidus A."/>
            <person name="Lardinois S."/>
            <person name="Lauber J."/>
            <person name="Lazarevic V."/>
            <person name="Lee S.-M."/>
            <person name="Levine A."/>
            <person name="Liu H."/>
            <person name="Masuda S."/>
            <person name="Mauel C."/>
            <person name="Medigue C."/>
            <person name="Medina N."/>
            <person name="Mellado R.P."/>
            <person name="Mizuno M."/>
            <person name="Moestl D."/>
            <person name="Nakai S."/>
            <person name="Noback M."/>
            <person name="Noone D."/>
            <person name="O'Reilly M."/>
            <person name="Ogawa K."/>
            <person name="Ogiwara A."/>
            <person name="Oudega B."/>
            <person name="Park S.-H."/>
            <person name="Parro V."/>
            <person name="Pohl T.M."/>
            <person name="Portetelle D."/>
            <person name="Porwollik S."/>
            <person name="Prescott A.M."/>
            <person name="Presecan E."/>
            <person name="Pujic P."/>
            <person name="Purnelle B."/>
            <person name="Rapoport G."/>
            <person name="Rey M."/>
            <person name="Reynolds S."/>
            <person name="Rieger M."/>
            <person name="Rivolta C."/>
            <person name="Rocha E."/>
            <person name="Roche B."/>
            <person name="Rose M."/>
            <person name="Sadaie Y."/>
            <person name="Sato T."/>
            <person name="Scanlan E."/>
            <person name="Schleich S."/>
            <person name="Schroeter R."/>
            <person name="Scoffone F."/>
            <person name="Sekiguchi J."/>
            <person name="Sekowska A."/>
            <person name="Seror S.J."/>
            <person name="Serror P."/>
            <person name="Shin B.-S."/>
            <person name="Soldo B."/>
            <person name="Sorokin A."/>
            <person name="Tacconi E."/>
            <person name="Takagi T."/>
            <person name="Takahashi H."/>
            <person name="Takemaru K."/>
            <person name="Takeuchi M."/>
            <person name="Tamakoshi A."/>
            <person name="Tanaka T."/>
            <person name="Terpstra P."/>
            <person name="Tognoni A."/>
            <person name="Tosato V."/>
            <person name="Uchiyama S."/>
            <person name="Vandenbol M."/>
            <person name="Vannier F."/>
            <person name="Vassarotti A."/>
            <person name="Viari A."/>
            <person name="Wambutt R."/>
            <person name="Wedler E."/>
            <person name="Wedler H."/>
            <person name="Weitzenegger T."/>
            <person name="Winters P."/>
            <person name="Wipat A."/>
            <person name="Yamamoto H."/>
            <person name="Yamane K."/>
            <person name="Yasumoto K."/>
            <person name="Yata K."/>
            <person name="Yoshida K."/>
            <person name="Yoshikawa H.-F."/>
            <person name="Zumstein E."/>
            <person name="Yoshikawa H."/>
            <person name="Danchin A."/>
        </authorList>
    </citation>
    <scope>NUCLEOTIDE SEQUENCE [LARGE SCALE GENOMIC DNA]</scope>
    <source>
        <strain>168</strain>
    </source>
</reference>
<reference key="3">
    <citation type="journal article" date="2009" name="Microbiology">
        <title>From a consortium sequence to a unified sequence: the Bacillus subtilis 168 reference genome a decade later.</title>
        <authorList>
            <person name="Barbe V."/>
            <person name="Cruveiller S."/>
            <person name="Kunst F."/>
            <person name="Lenoble P."/>
            <person name="Meurice G."/>
            <person name="Sekowska A."/>
            <person name="Vallenet D."/>
            <person name="Wang T."/>
            <person name="Moszer I."/>
            <person name="Medigue C."/>
            <person name="Danchin A."/>
        </authorList>
    </citation>
    <scope>SEQUENCE REVISION</scope>
</reference>
<reference key="4">
    <citation type="journal article" date="2007" name="Appl. Environ. Microbiol.">
        <title>Plant cell wall degradation by saprophytic Bacillus subtilis strains: gene clusters responsible for rhamnogalacturonan depolymerization.</title>
        <authorList>
            <person name="Ochiai A."/>
            <person name="Itoh T."/>
            <person name="Kawamata A."/>
            <person name="Hashimoto W."/>
            <person name="Murata K."/>
        </authorList>
    </citation>
    <scope>INDUCTION</scope>
    <scope>FUNCTION</scope>
    <source>
        <strain>168</strain>
    </source>
</reference>
<reference key="5">
    <citation type="journal article" date="2017" name="PLoS ONE">
        <title>The MsmX ATPase plays a crucial role in pectin mobilization by Bacillus subtilis.</title>
        <authorList>
            <person name="Ferreira M.J."/>
            <person name="Mendes A.L."/>
            <person name="de Sa-Nogueira I."/>
        </authorList>
    </citation>
    <scope>FUNCTION</scope>
    <scope>SUBUNIT</scope>
</reference>
<gene>
    <name type="primary">yteP</name>
    <name type="synonym">yteQ</name>
    <name type="ordered locus">BSU30135</name>
    <name type="ORF">BSU30130/BSU30140</name>
</gene>
<proteinExistence type="evidence at protein level"/>
<sequence>MKTAEAQAPAVDAVIFKKEKRKRLLIKLIQQKYLYLMILPGCIYFLLFKYVPMWGIVIAFQDYQPFLGILGSEWVGLKHFIRLFTEPTFFLLLKNTLVLFALNLAIFFPVPILLALLLNEVRIALFKKFVQTLIYIPHFMSWVIVVSLSFVLLTVDGGLINELIVFFGGEKINFLLNEEWFRPLYILQVIWREAGWSTIIYLAAITAVDPQLYEAAKMDGAGRLRQMWHITLPAIKSVIVVLLILKIGDTLELGFEHVYLLLNATNREVAEIFDTYVYTAGLKQGQFSYSTAVGVFKAAVGLILVMLANRLAKKFGEEGIY</sequence>
<name>YTEP_BACSU</name>
<evidence type="ECO:0000255" key="1">
    <source>
        <dbReference type="PROSITE-ProRule" id="PRU00441"/>
    </source>
</evidence>
<evidence type="ECO:0000269" key="2">
    <source>
    </source>
</evidence>
<evidence type="ECO:0000269" key="3">
    <source>
    </source>
</evidence>
<evidence type="ECO:0000305" key="4"/>
<accession>C0SPB3</accession>
<accession>O30504</accession>
<accession>O34826</accession>
<accession>Q795R3</accession>
<keyword id="KW-1003">Cell membrane</keyword>
<keyword id="KW-0472">Membrane</keyword>
<keyword id="KW-1185">Reference proteome</keyword>
<keyword id="KW-0762">Sugar transport</keyword>
<keyword id="KW-0812">Transmembrane</keyword>
<keyword id="KW-1133">Transmembrane helix</keyword>
<keyword id="KW-0813">Transport</keyword>
<comment type="function">
    <text evidence="2 3 4">Involved in pectin degradation (PubMed:29240795). Part of the ABC transporter complex YtcQP-YteP involved in the uptake of polygalacturonan and rhamnogalacturonan type I (PubMed:17449691, PubMed:29240795). Responsible for the translocation of the substrate across the membrane (Probable).</text>
</comment>
<comment type="subunit">
    <text evidence="3">The complex is probably composed of two ATP-binding proteins (MsmX), two transmembrane proteins (YtcP and YteP) and a solute-binding protein (YtcQ).</text>
</comment>
<comment type="subcellular location">
    <subcellularLocation>
        <location evidence="4">Cell membrane</location>
        <topology evidence="1">Multi-pass membrane protein</topology>
    </subcellularLocation>
</comment>
<comment type="induction">
    <text evidence="2">Up-regulated by growth on type I rhamnogalacturonan.</text>
</comment>
<comment type="similarity">
    <text evidence="4">Belongs to the binding-protein-dependent transport system permease family.</text>
</comment>
<comment type="sequence caution" evidence="4">
    <conflict type="frameshift">
        <sequence resource="EMBL-CDS" id="AAC00270"/>
    </conflict>
</comment>
<comment type="sequence caution" evidence="4">
    <conflict type="frameshift">
        <sequence resource="EMBL-CDS" id="AAC00271"/>
    </conflict>
</comment>
<feature type="chain" id="PRO_0000378075" description="Polygalacturonan/rhamnogalacturonan transport system permease protein YteP">
    <location>
        <begin position="1"/>
        <end position="321"/>
    </location>
</feature>
<feature type="transmembrane region" description="Helical" evidence="1">
    <location>
        <begin position="21"/>
        <end position="41"/>
    </location>
</feature>
<feature type="transmembrane region" description="Helical" evidence="1">
    <location>
        <begin position="63"/>
        <end position="83"/>
    </location>
</feature>
<feature type="transmembrane region" description="Helical" evidence="1">
    <location>
        <begin position="123"/>
        <end position="143"/>
    </location>
</feature>
<feature type="domain" description="ABC transmembrane type-1" evidence="1">
    <location>
        <begin position="1"/>
        <end position="144"/>
    </location>
</feature>
<protein>
    <recommendedName>
        <fullName evidence="4">Polygalacturonan/rhamnogalacturonan transport system permease protein YteP</fullName>
    </recommendedName>
</protein>
<dbReference type="EMBL" id="AF008220">
    <property type="protein sequence ID" value="AAC00270.1"/>
    <property type="status" value="ALT_FRAME"/>
    <property type="molecule type" value="Genomic_DNA"/>
</dbReference>
<dbReference type="EMBL" id="AF008220">
    <property type="protein sequence ID" value="AAC00271.1"/>
    <property type="status" value="ALT_FRAME"/>
    <property type="molecule type" value="Genomic_DNA"/>
</dbReference>
<dbReference type="EMBL" id="AL009126">
    <property type="protein sequence ID" value="CAB14992.2"/>
    <property type="molecule type" value="Genomic_DNA"/>
</dbReference>
<dbReference type="PIR" id="G69990">
    <property type="entry name" value="G69990"/>
</dbReference>
<dbReference type="SMR" id="C0SPB3"/>
<dbReference type="FunCoup" id="C0SPB3">
    <property type="interactions" value="31"/>
</dbReference>
<dbReference type="STRING" id="224308.BSU30135"/>
<dbReference type="PaxDb" id="224308-BSU30135"/>
<dbReference type="EnsemblBacteria" id="CAB14992">
    <property type="protein sequence ID" value="CAB14992"/>
    <property type="gene ID" value="BSU_30135"/>
</dbReference>
<dbReference type="GeneID" id="937271"/>
<dbReference type="KEGG" id="bsu:BSU30135"/>
<dbReference type="PATRIC" id="fig|224308.179.peg.3270"/>
<dbReference type="eggNOG" id="COG4209">
    <property type="taxonomic scope" value="Bacteria"/>
</dbReference>
<dbReference type="InParanoid" id="C0SPB3"/>
<dbReference type="OrthoDB" id="9785836at2"/>
<dbReference type="PhylomeDB" id="C0SPB3"/>
<dbReference type="BioCyc" id="BSUB:BSU30135-MONOMER"/>
<dbReference type="Proteomes" id="UP000001570">
    <property type="component" value="Chromosome"/>
</dbReference>
<dbReference type="GO" id="GO:0005886">
    <property type="term" value="C:plasma membrane"/>
    <property type="evidence" value="ECO:0007669"/>
    <property type="project" value="UniProtKB-SubCell"/>
</dbReference>
<dbReference type="GO" id="GO:0055085">
    <property type="term" value="P:transmembrane transport"/>
    <property type="evidence" value="ECO:0007669"/>
    <property type="project" value="InterPro"/>
</dbReference>
<dbReference type="CDD" id="cd06261">
    <property type="entry name" value="TM_PBP2"/>
    <property type="match status" value="1"/>
</dbReference>
<dbReference type="Gene3D" id="1.10.3720.10">
    <property type="entry name" value="MetI-like"/>
    <property type="match status" value="1"/>
</dbReference>
<dbReference type="InterPro" id="IPR000515">
    <property type="entry name" value="MetI-like"/>
</dbReference>
<dbReference type="InterPro" id="IPR035906">
    <property type="entry name" value="MetI-like_sf"/>
</dbReference>
<dbReference type="PANTHER" id="PTHR43496:SF1">
    <property type="entry name" value="POLYGALACTURONAN_RHAMNOGALACTURONAN TRANSPORT SYSTEM PERMEASE PROTEIN YTEP"/>
    <property type="match status" value="1"/>
</dbReference>
<dbReference type="PANTHER" id="PTHR43496">
    <property type="entry name" value="PROTEIN LPLB"/>
    <property type="match status" value="1"/>
</dbReference>
<dbReference type="Pfam" id="PF00528">
    <property type="entry name" value="BPD_transp_1"/>
    <property type="match status" value="1"/>
</dbReference>
<dbReference type="SUPFAM" id="SSF161098">
    <property type="entry name" value="MetI-like"/>
    <property type="match status" value="1"/>
</dbReference>
<dbReference type="PROSITE" id="PS50928">
    <property type="entry name" value="ABC_TM1"/>
    <property type="match status" value="1"/>
</dbReference>
<organism>
    <name type="scientific">Bacillus subtilis (strain 168)</name>
    <dbReference type="NCBI Taxonomy" id="224308"/>
    <lineage>
        <taxon>Bacteria</taxon>
        <taxon>Bacillati</taxon>
        <taxon>Bacillota</taxon>
        <taxon>Bacilli</taxon>
        <taxon>Bacillales</taxon>
        <taxon>Bacillaceae</taxon>
        <taxon>Bacillus</taxon>
    </lineage>
</organism>